<feature type="chain" id="PRO_0000246857" description="7-cyano-7-deazaguanine synthase">
    <location>
        <begin position="1"/>
        <end position="228"/>
    </location>
</feature>
<feature type="binding site" evidence="1">
    <location>
        <begin position="8"/>
        <end position="18"/>
    </location>
    <ligand>
        <name>ATP</name>
        <dbReference type="ChEBI" id="CHEBI:30616"/>
    </ligand>
</feature>
<feature type="binding site" evidence="1">
    <location>
        <position position="188"/>
    </location>
    <ligand>
        <name>Zn(2+)</name>
        <dbReference type="ChEBI" id="CHEBI:29105"/>
    </ligand>
</feature>
<feature type="binding site" evidence="1">
    <location>
        <position position="198"/>
    </location>
    <ligand>
        <name>Zn(2+)</name>
        <dbReference type="ChEBI" id="CHEBI:29105"/>
    </ligand>
</feature>
<feature type="binding site" evidence="1">
    <location>
        <position position="201"/>
    </location>
    <ligand>
        <name>Zn(2+)</name>
        <dbReference type="ChEBI" id="CHEBI:29105"/>
    </ligand>
</feature>
<feature type="binding site" evidence="1">
    <location>
        <position position="204"/>
    </location>
    <ligand>
        <name>Zn(2+)</name>
        <dbReference type="ChEBI" id="CHEBI:29105"/>
    </ligand>
</feature>
<proteinExistence type="inferred from homology"/>
<reference key="1">
    <citation type="journal article" date="2004" name="Science">
        <title>The genomic sequence of the accidental pathogen Legionella pneumophila.</title>
        <authorList>
            <person name="Chien M."/>
            <person name="Morozova I."/>
            <person name="Shi S."/>
            <person name="Sheng H."/>
            <person name="Chen J."/>
            <person name="Gomez S.M."/>
            <person name="Asamani G."/>
            <person name="Hill K."/>
            <person name="Nuara J."/>
            <person name="Feder M."/>
            <person name="Rineer J."/>
            <person name="Greenberg J.J."/>
            <person name="Steshenko V."/>
            <person name="Park S.H."/>
            <person name="Zhao B."/>
            <person name="Teplitskaya E."/>
            <person name="Edwards J.R."/>
            <person name="Pampou S."/>
            <person name="Georghiou A."/>
            <person name="Chou I.-C."/>
            <person name="Iannuccilli W."/>
            <person name="Ulz M.E."/>
            <person name="Kim D.H."/>
            <person name="Geringer-Sameth A."/>
            <person name="Goldsberry C."/>
            <person name="Morozov P."/>
            <person name="Fischer S.G."/>
            <person name="Segal G."/>
            <person name="Qu X."/>
            <person name="Rzhetsky A."/>
            <person name="Zhang P."/>
            <person name="Cayanis E."/>
            <person name="De Jong P.J."/>
            <person name="Ju J."/>
            <person name="Kalachikov S."/>
            <person name="Shuman H.A."/>
            <person name="Russo J.J."/>
        </authorList>
    </citation>
    <scope>NUCLEOTIDE SEQUENCE [LARGE SCALE GENOMIC DNA]</scope>
    <source>
        <strain>Philadelphia 1 / ATCC 33152 / DSM 7513</strain>
    </source>
</reference>
<gene>
    <name evidence="1" type="primary">queC</name>
    <name type="ordered locus">lpg2886</name>
</gene>
<name>QUEC_LEGPH</name>
<evidence type="ECO:0000255" key="1">
    <source>
        <dbReference type="HAMAP-Rule" id="MF_01633"/>
    </source>
</evidence>
<evidence type="ECO:0000305" key="2"/>
<dbReference type="EC" id="6.3.4.20" evidence="1"/>
<dbReference type="EMBL" id="AE017354">
    <property type="protein sequence ID" value="AAU28933.1"/>
    <property type="status" value="ALT_INIT"/>
    <property type="molecule type" value="Genomic_DNA"/>
</dbReference>
<dbReference type="RefSeq" id="WP_015443906.1">
    <property type="nucleotide sequence ID" value="NC_002942.5"/>
</dbReference>
<dbReference type="RefSeq" id="YP_096880.1">
    <property type="nucleotide sequence ID" value="NC_002942.5"/>
</dbReference>
<dbReference type="SMR" id="Q5ZRJ5"/>
<dbReference type="STRING" id="272624.lpg2886"/>
<dbReference type="PaxDb" id="272624-lpg2886"/>
<dbReference type="GeneID" id="57036885"/>
<dbReference type="KEGG" id="lpn:lpg2886"/>
<dbReference type="PATRIC" id="fig|272624.6.peg.3074"/>
<dbReference type="eggNOG" id="COG0603">
    <property type="taxonomic scope" value="Bacteria"/>
</dbReference>
<dbReference type="HOGENOM" id="CLU_081854_1_0_6"/>
<dbReference type="OrthoDB" id="9789567at2"/>
<dbReference type="UniPathway" id="UPA00391"/>
<dbReference type="Proteomes" id="UP000000609">
    <property type="component" value="Chromosome"/>
</dbReference>
<dbReference type="GO" id="GO:0005524">
    <property type="term" value="F:ATP binding"/>
    <property type="evidence" value="ECO:0007669"/>
    <property type="project" value="UniProtKB-UniRule"/>
</dbReference>
<dbReference type="GO" id="GO:0016879">
    <property type="term" value="F:ligase activity, forming carbon-nitrogen bonds"/>
    <property type="evidence" value="ECO:0007669"/>
    <property type="project" value="UniProtKB-UniRule"/>
</dbReference>
<dbReference type="GO" id="GO:0008270">
    <property type="term" value="F:zinc ion binding"/>
    <property type="evidence" value="ECO:0007669"/>
    <property type="project" value="UniProtKB-UniRule"/>
</dbReference>
<dbReference type="GO" id="GO:0008616">
    <property type="term" value="P:queuosine biosynthetic process"/>
    <property type="evidence" value="ECO:0007669"/>
    <property type="project" value="UniProtKB-UniRule"/>
</dbReference>
<dbReference type="CDD" id="cd01995">
    <property type="entry name" value="QueC-like"/>
    <property type="match status" value="1"/>
</dbReference>
<dbReference type="Gene3D" id="3.40.50.620">
    <property type="entry name" value="HUPs"/>
    <property type="match status" value="1"/>
</dbReference>
<dbReference type="HAMAP" id="MF_01633">
    <property type="entry name" value="QueC"/>
    <property type="match status" value="1"/>
</dbReference>
<dbReference type="InterPro" id="IPR018317">
    <property type="entry name" value="QueC"/>
</dbReference>
<dbReference type="InterPro" id="IPR014729">
    <property type="entry name" value="Rossmann-like_a/b/a_fold"/>
</dbReference>
<dbReference type="NCBIfam" id="TIGR00364">
    <property type="entry name" value="7-cyano-7-deazaguanine synthase QueC"/>
    <property type="match status" value="1"/>
</dbReference>
<dbReference type="PANTHER" id="PTHR42914">
    <property type="entry name" value="7-CYANO-7-DEAZAGUANINE SYNTHASE"/>
    <property type="match status" value="1"/>
</dbReference>
<dbReference type="PANTHER" id="PTHR42914:SF1">
    <property type="entry name" value="7-CYANO-7-DEAZAGUANINE SYNTHASE"/>
    <property type="match status" value="1"/>
</dbReference>
<dbReference type="Pfam" id="PF06508">
    <property type="entry name" value="QueC"/>
    <property type="match status" value="1"/>
</dbReference>
<dbReference type="PIRSF" id="PIRSF006293">
    <property type="entry name" value="ExsB"/>
    <property type="match status" value="1"/>
</dbReference>
<dbReference type="SUPFAM" id="SSF52402">
    <property type="entry name" value="Adenine nucleotide alpha hydrolases-like"/>
    <property type="match status" value="1"/>
</dbReference>
<accession>Q5ZRJ5</accession>
<organism>
    <name type="scientific">Legionella pneumophila subsp. pneumophila (strain Philadelphia 1 / ATCC 33152 / DSM 7513)</name>
    <dbReference type="NCBI Taxonomy" id="272624"/>
    <lineage>
        <taxon>Bacteria</taxon>
        <taxon>Pseudomonadati</taxon>
        <taxon>Pseudomonadota</taxon>
        <taxon>Gammaproteobacteria</taxon>
        <taxon>Legionellales</taxon>
        <taxon>Legionellaceae</taxon>
        <taxon>Legionella</taxon>
    </lineage>
</organism>
<protein>
    <recommendedName>
        <fullName evidence="1">7-cyano-7-deazaguanine synthase</fullName>
        <ecNumber evidence="1">6.3.4.20</ecNumber>
    </recommendedName>
    <alternativeName>
        <fullName evidence="1">7-cyano-7-carbaguanine synthase</fullName>
    </alternativeName>
    <alternativeName>
        <fullName evidence="1">PreQ(0) synthase</fullName>
    </alternativeName>
    <alternativeName>
        <fullName evidence="1">Queuosine biosynthesis protein QueC</fullName>
    </alternativeName>
</protein>
<comment type="function">
    <text evidence="1">Catalyzes the ATP-dependent conversion of 7-carboxy-7-deazaguanine (CDG) to 7-cyano-7-deazaguanine (preQ(0)).</text>
</comment>
<comment type="catalytic activity">
    <reaction evidence="1">
        <text>7-carboxy-7-deazaguanine + NH4(+) + ATP = 7-cyano-7-deazaguanine + ADP + phosphate + H2O + H(+)</text>
        <dbReference type="Rhea" id="RHEA:27982"/>
        <dbReference type="ChEBI" id="CHEBI:15377"/>
        <dbReference type="ChEBI" id="CHEBI:15378"/>
        <dbReference type="ChEBI" id="CHEBI:28938"/>
        <dbReference type="ChEBI" id="CHEBI:30616"/>
        <dbReference type="ChEBI" id="CHEBI:43474"/>
        <dbReference type="ChEBI" id="CHEBI:45075"/>
        <dbReference type="ChEBI" id="CHEBI:61036"/>
        <dbReference type="ChEBI" id="CHEBI:456216"/>
        <dbReference type="EC" id="6.3.4.20"/>
    </reaction>
</comment>
<comment type="cofactor">
    <cofactor evidence="1">
        <name>Zn(2+)</name>
        <dbReference type="ChEBI" id="CHEBI:29105"/>
    </cofactor>
    <text evidence="1">Binds 1 zinc ion per subunit.</text>
</comment>
<comment type="pathway">
    <text evidence="1">Purine metabolism; 7-cyano-7-deazaguanine biosynthesis.</text>
</comment>
<comment type="similarity">
    <text evidence="1">Belongs to the QueC family.</text>
</comment>
<comment type="sequence caution" evidence="2">
    <conflict type="erroneous initiation">
        <sequence resource="EMBL-CDS" id="AAU28933"/>
    </conflict>
</comment>
<keyword id="KW-0067">ATP-binding</keyword>
<keyword id="KW-0436">Ligase</keyword>
<keyword id="KW-0479">Metal-binding</keyword>
<keyword id="KW-0547">Nucleotide-binding</keyword>
<keyword id="KW-0671">Queuosine biosynthesis</keyword>
<keyword id="KW-1185">Reference proteome</keyword>
<keyword id="KW-0862">Zinc</keyword>
<sequence length="228" mass="24477">MKKAVVLLSGGLDSTTCLALAKSQGFACYALSFSYGQRHSAELCAATRIAKHMGAADHKIVTLDIALFGGSALTDASIEVPEFKESPEIPVTYVPARNTIFLAMALGYAESIGARDIFIGASSVDYSHYPDCRPEFIESFQSLANLATKAGIEGDRFTINAPLQYLSKVQTIQLGTELGVDYGLTVSCYQANEAGEACGQCDSCTFRKRGFKSAGVDDPTRYQKCVHI</sequence>